<accession>Q2PG52</accession>
<name>BEX1_MACFA</name>
<dbReference type="EMBL" id="AB220385">
    <property type="protein sequence ID" value="BAE72918.1"/>
    <property type="molecule type" value="mRNA"/>
</dbReference>
<dbReference type="RefSeq" id="NP_001274563.1">
    <property type="nucleotide sequence ID" value="NM_001287634.1"/>
</dbReference>
<dbReference type="RefSeq" id="XP_045240136.1">
    <property type="nucleotide sequence ID" value="XM_045384201.1"/>
</dbReference>
<dbReference type="STRING" id="9541.ENSMFAP00000012284"/>
<dbReference type="Ensembl" id="ENSMFAT00000057060.2">
    <property type="protein sequence ID" value="ENSMFAP00000012284.1"/>
    <property type="gene ID" value="ENSMFAG00000023283.2"/>
</dbReference>
<dbReference type="GeneID" id="102145923"/>
<dbReference type="VEuPathDB" id="HostDB:ENSMFAG00000023283"/>
<dbReference type="eggNOG" id="ENOG502RW3Y">
    <property type="taxonomic scope" value="Eukaryota"/>
</dbReference>
<dbReference type="GeneTree" id="ENSGT00940000153412"/>
<dbReference type="OMA" id="GKPQARM"/>
<dbReference type="Proteomes" id="UP000233100">
    <property type="component" value="Chromosome X"/>
</dbReference>
<dbReference type="Bgee" id="ENSMFAG00000023283">
    <property type="expression patterns" value="Expressed in pituitary gland and 13 other cell types or tissues"/>
</dbReference>
<dbReference type="GO" id="GO:0005737">
    <property type="term" value="C:cytoplasm"/>
    <property type="evidence" value="ECO:0007669"/>
    <property type="project" value="UniProtKB-SubCell"/>
</dbReference>
<dbReference type="GO" id="GO:0005634">
    <property type="term" value="C:nucleus"/>
    <property type="evidence" value="ECO:0007669"/>
    <property type="project" value="UniProtKB-SubCell"/>
</dbReference>
<dbReference type="GO" id="GO:0005667">
    <property type="term" value="C:transcription regulator complex"/>
    <property type="evidence" value="ECO:0007669"/>
    <property type="project" value="Ensembl"/>
</dbReference>
<dbReference type="GO" id="GO:0046872">
    <property type="term" value="F:metal ion binding"/>
    <property type="evidence" value="ECO:0007669"/>
    <property type="project" value="UniProtKB-KW"/>
</dbReference>
<dbReference type="GO" id="GO:0140678">
    <property type="term" value="F:molecular function inhibitor activity"/>
    <property type="evidence" value="ECO:0000250"/>
    <property type="project" value="UniProtKB"/>
</dbReference>
<dbReference type="GO" id="GO:0035591">
    <property type="term" value="F:signaling adaptor activity"/>
    <property type="evidence" value="ECO:0007669"/>
    <property type="project" value="Ensembl"/>
</dbReference>
<dbReference type="GO" id="GO:0005102">
    <property type="term" value="F:signaling receptor binding"/>
    <property type="evidence" value="ECO:0007669"/>
    <property type="project" value="TreeGrafter"/>
</dbReference>
<dbReference type="GO" id="GO:0001223">
    <property type="term" value="F:transcription coactivator binding"/>
    <property type="evidence" value="ECO:0007669"/>
    <property type="project" value="Ensembl"/>
</dbReference>
<dbReference type="GO" id="GO:0030154">
    <property type="term" value="P:cell differentiation"/>
    <property type="evidence" value="ECO:0007669"/>
    <property type="project" value="UniProtKB-KW"/>
</dbReference>
<dbReference type="GO" id="GO:0031397">
    <property type="term" value="P:negative regulation of protein ubiquitination"/>
    <property type="evidence" value="ECO:0000250"/>
    <property type="project" value="UniProtKB"/>
</dbReference>
<dbReference type="GO" id="GO:0007399">
    <property type="term" value="P:nervous system development"/>
    <property type="evidence" value="ECO:0007669"/>
    <property type="project" value="UniProtKB-KW"/>
</dbReference>
<dbReference type="GO" id="GO:0045944">
    <property type="term" value="P:positive regulation of transcription by RNA polymerase II"/>
    <property type="evidence" value="ECO:0007669"/>
    <property type="project" value="Ensembl"/>
</dbReference>
<dbReference type="GO" id="GO:0007165">
    <property type="term" value="P:signal transduction"/>
    <property type="evidence" value="ECO:0007669"/>
    <property type="project" value="TreeGrafter"/>
</dbReference>
<dbReference type="InterPro" id="IPR007623">
    <property type="entry name" value="BEX"/>
</dbReference>
<dbReference type="InterPro" id="IPR021156">
    <property type="entry name" value="TF_A-like/BEX"/>
</dbReference>
<dbReference type="PANTHER" id="PTHR19430:SF3">
    <property type="entry name" value="PROTEIN BEX1"/>
    <property type="match status" value="1"/>
</dbReference>
<dbReference type="PANTHER" id="PTHR19430">
    <property type="entry name" value="PROTEIN BEX1-RELATED"/>
    <property type="match status" value="1"/>
</dbReference>
<dbReference type="Pfam" id="PF04538">
    <property type="entry name" value="BEX"/>
    <property type="match status" value="1"/>
</dbReference>
<dbReference type="PIRSF" id="PIRSF008633">
    <property type="entry name" value="BEX"/>
    <property type="match status" value="1"/>
</dbReference>
<proteinExistence type="evidence at transcript level"/>
<gene>
    <name type="primary">BEX1</name>
    <name type="ORF">QbsB-11523</name>
</gene>
<sequence>MESKEKRAVNNLSMENTNQENEEKEEKEQVANKGEPLALPLDAGEYCVPRGNRRRFRVRQPILQYRWDMMHRLGEPQARMREENMERIGEEVRQLMEKLREKQLSHSLRAVSTDPPHHDHHDEFCLMP</sequence>
<evidence type="ECO:0000250" key="1">
    <source>
        <dbReference type="UniProtKB" id="Q3MKQ2"/>
    </source>
</evidence>
<evidence type="ECO:0000250" key="2">
    <source>
        <dbReference type="UniProtKB" id="Q9R224"/>
    </source>
</evidence>
<evidence type="ECO:0000250" key="3">
    <source>
        <dbReference type="UniProtKB" id="Q9WTZ9"/>
    </source>
</evidence>
<evidence type="ECO:0000256" key="4">
    <source>
        <dbReference type="SAM" id="MobiDB-lite"/>
    </source>
</evidence>
<evidence type="ECO:0000305" key="5"/>
<protein>
    <recommendedName>
        <fullName>Protein BEX1</fullName>
    </recommendedName>
    <alternativeName>
        <fullName>Brain-expressed X-linked protein 1 homolog</fullName>
    </alternativeName>
</protein>
<feature type="chain" id="PRO_0000229773" description="Protein BEX1">
    <location>
        <begin position="1"/>
        <end position="128"/>
    </location>
</feature>
<feature type="region of interest" description="Disordered" evidence="4">
    <location>
        <begin position="1"/>
        <end position="37"/>
    </location>
</feature>
<feature type="region of interest" description="Disordered" evidence="4">
    <location>
        <begin position="107"/>
        <end position="128"/>
    </location>
</feature>
<feature type="region of interest" description="His cluster" evidence="3">
    <location>
        <begin position="117"/>
        <end position="121"/>
    </location>
</feature>
<feature type="compositionally biased region" description="Basic and acidic residues" evidence="4">
    <location>
        <begin position="115"/>
        <end position="128"/>
    </location>
</feature>
<feature type="binding site" evidence="3">
    <location>
        <position position="125"/>
    </location>
    <ligand>
        <name>Zn(2+)</name>
        <dbReference type="ChEBI" id="CHEBI:29105"/>
        <note>ligand shared with FEM1B</note>
    </ligand>
</feature>
<feature type="modified residue" description="Phosphoserine" evidence="1">
    <location>
        <position position="105"/>
    </location>
</feature>
<keyword id="KW-0963">Cytoplasm</keyword>
<keyword id="KW-0217">Developmental protein</keyword>
<keyword id="KW-0221">Differentiation</keyword>
<keyword id="KW-0479">Metal-binding</keyword>
<keyword id="KW-0524">Neurogenesis</keyword>
<keyword id="KW-0539">Nucleus</keyword>
<keyword id="KW-0597">Phosphoprotein</keyword>
<keyword id="KW-1185">Reference proteome</keyword>
<keyword id="KW-0832">Ubl conjugation</keyword>
<keyword id="KW-0862">Zinc</keyword>
<reference key="1">
    <citation type="submission" date="2005-07" db="EMBL/GenBank/DDBJ databases">
        <title>Isolation of full-length cDNA clones from macaque brain cDNA libraries.</title>
        <authorList>
            <person name="Osada N."/>
            <person name="Hida M."/>
            <person name="Kusuda J."/>
            <person name="Tanuma R."/>
            <person name="Iseki K."/>
            <person name="Hirai M."/>
            <person name="Terao K."/>
            <person name="Suzuki Y."/>
            <person name="Sugano S."/>
            <person name="Hashimoto K."/>
        </authorList>
    </citation>
    <scope>NUCLEOTIDE SEQUENCE [LARGE SCALE MRNA]</scope>
    <source>
        <tissue>Brain stem</tissue>
    </source>
</reference>
<comment type="function">
    <text evidence="1 2">Signaling adapter molecule involved in p75NTR/NGFR signaling. Plays a role in cell cycle progression and neuronal differentiation. Inhibits neuronal differentiation in response to nerve growth factor (NGF). May act as a link between the cell cycle and neurotrophic factor signaling, possibly by functioning as an upstream modulator of receptor signaling, coordinating biological responses to external signals with internal cellular states (By similarity). In absence of reductive stress, acts as a pseudosubstrate for the CRL2(FEM1B) complex: associates with FEM1B via zinc, thereby preventing association between FEM1B and its substrates (By similarity).</text>
</comment>
<comment type="subunit">
    <text evidence="1 2">Interacts with neurotrophin receptor p75NTR/NGFR (By similarity). Interacts with OMP (By similarity).</text>
</comment>
<comment type="subcellular location">
    <subcellularLocation>
        <location evidence="1">Nucleus</location>
    </subcellularLocation>
    <subcellularLocation>
        <location evidence="1">Cytoplasm</location>
    </subcellularLocation>
    <text evidence="1">Shuttles between the cytoplasm and the nucleus. Predominantly nuclear.</text>
</comment>
<comment type="domain">
    <text evidence="3">The histidine cluster (His cluster) and Cys-125 mediate zinc-binding.</text>
</comment>
<comment type="PTM">
    <text evidence="1">Phosphorylated. Phosphorylation of Ser-105 protects it from the proteasome.</text>
</comment>
<comment type="PTM">
    <text evidence="1">Ubiquitinated. Degraded by the proteasome.</text>
</comment>
<comment type="similarity">
    <text evidence="5">Belongs to the BEX family.</text>
</comment>
<organism>
    <name type="scientific">Macaca fascicularis</name>
    <name type="common">Crab-eating macaque</name>
    <name type="synonym">Cynomolgus monkey</name>
    <dbReference type="NCBI Taxonomy" id="9541"/>
    <lineage>
        <taxon>Eukaryota</taxon>
        <taxon>Metazoa</taxon>
        <taxon>Chordata</taxon>
        <taxon>Craniata</taxon>
        <taxon>Vertebrata</taxon>
        <taxon>Euteleostomi</taxon>
        <taxon>Mammalia</taxon>
        <taxon>Eutheria</taxon>
        <taxon>Euarchontoglires</taxon>
        <taxon>Primates</taxon>
        <taxon>Haplorrhini</taxon>
        <taxon>Catarrhini</taxon>
        <taxon>Cercopithecidae</taxon>
        <taxon>Cercopithecinae</taxon>
        <taxon>Macaca</taxon>
    </lineage>
</organism>